<comment type="function">
    <text evidence="1">Responsible for addition of the terminal mannose residues to the outer chain of core N-linked polysaccharides and to O-linked mannotriose. Implicated in late Golgi modifications (By similarity).</text>
</comment>
<comment type="pathway">
    <text>Protein modification; protein glycosylation.</text>
</comment>
<comment type="subcellular location">
    <subcellularLocation>
        <location evidence="1">Golgi apparatus membrane</location>
        <topology evidence="1">Single-pass type II membrane protein</topology>
    </subcellularLocation>
</comment>
<comment type="induction">
    <text evidence="4 5">Induced during biofilm formation and Up-regulated in response to treatment with MUC7 12-mer, a cationic antimicrobial peptide derived from the N-terminal region of human low-molecular-weight salivary mucin.</text>
</comment>
<comment type="similarity">
    <text evidence="6">Belongs to the MNN1/MNT family.</text>
</comment>
<sequence>MRFTLKKIFFVFLTLLIISIGYLLLQSVDLQRIRELLHDSEKFDLESLKQASLEIRKEIHYTNYLFSGYDNFTQQFSDEETLKQTSLNDKCKLVFTQWKESHPDFEFKTFEPEYERYDKSSDRKELFFKERINQLRKRFEKDSNNKNKQFTLSRQDNKTISQEYMEHVNRSKNVLQFMADFVSMMRLYGKCFFGRELDDELKSIYNEFRGKLFPFISSQAPKFRKSGETEEFGWPIYDNENNIIDRKTEFGDNPIEFLQKNSKGKGIVISVSTRYAKDAMRLIKILRALNNRLPIQIIYKNDITKKNIELLEFAAVATPEELFDPETIRDGAKFMPELNLLEHYKNYGSEFPIQDLTFVNIAGCVSRPYRFSFPGYSNKILAMLYSSFEEIILFDADVVPTVNPQEFFDSKYYKSSGTYFFQDRSLRDFNDFIETNFFSTLFPSNEKSIETIFDIPRVGEKTFNNKYMTGWRHYQEAGVVAYNKMQHFLGILMMFPLALWSEPVQSSIWGDKEMYWLGLSMAGDENYEFNKYAAASVGEKTTEQKYKYYPNSDSNEVCSTHPGHIDDNGRLLWINSGFSYCKKNGYFRDKGKFPFSTFELNDLVELYNSPIKIRAGLVPPDLPNQREPGSPPDTKPEMEFRKSWKSRKKDTDEINEKLPEGQEPYDFISEWGPQKGWVKNGICSGYYYCAYDKITSYSSEKEFDTGTLFEFDTKSCELYDYLSKIWHTGGSKMKPKVKLETEKLGTGSDKEQXKDATTVRLRI</sequence>
<feature type="chain" id="PRO_0000424328" description="Putative alpha-1,3-mannosyltransferase MNN15">
    <location>
        <begin position="1"/>
        <end position="763"/>
    </location>
</feature>
<feature type="topological domain" description="Cytoplasmic" evidence="2">
    <location>
        <begin position="1"/>
        <end position="7"/>
    </location>
</feature>
<feature type="transmembrane region" description="Helical" evidence="2">
    <location>
        <begin position="8"/>
        <end position="28"/>
    </location>
</feature>
<feature type="topological domain" description="Lumenal" evidence="2">
    <location>
        <begin position="29"/>
        <end position="763"/>
    </location>
</feature>
<feature type="region of interest" description="Disordered" evidence="3">
    <location>
        <begin position="617"/>
        <end position="659"/>
    </location>
</feature>
<feature type="compositionally biased region" description="Basic and acidic residues" evidence="3">
    <location>
        <begin position="649"/>
        <end position="659"/>
    </location>
</feature>
<feature type="glycosylation site" description="N-linked (GlcNAc...) asparagine" evidence="2">
    <location>
        <position position="71"/>
    </location>
</feature>
<feature type="glycosylation site" description="N-linked (GlcNAc...) asparagine" evidence="2">
    <location>
        <position position="157"/>
    </location>
</feature>
<feature type="glycosylation site" description="N-linked (GlcNAc...) asparagine" evidence="2">
    <location>
        <position position="169"/>
    </location>
</feature>
<organism>
    <name type="scientific">Candida albicans (strain SC5314 / ATCC MYA-2876)</name>
    <name type="common">Yeast</name>
    <dbReference type="NCBI Taxonomy" id="237561"/>
    <lineage>
        <taxon>Eukaryota</taxon>
        <taxon>Fungi</taxon>
        <taxon>Dikarya</taxon>
        <taxon>Ascomycota</taxon>
        <taxon>Saccharomycotina</taxon>
        <taxon>Pichiomycetes</taxon>
        <taxon>Debaryomycetaceae</taxon>
        <taxon>Candida/Lodderomyces clade</taxon>
        <taxon>Candida</taxon>
    </lineage>
</organism>
<proteinExistence type="evidence at transcript level"/>
<protein>
    <recommendedName>
        <fullName>Putative alpha-1,3-mannosyltransferase MNN15</fullName>
        <ecNumber>2.4.1.-</ecNumber>
    </recommendedName>
</protein>
<evidence type="ECO:0000250" key="1"/>
<evidence type="ECO:0000255" key="2"/>
<evidence type="ECO:0000256" key="3">
    <source>
        <dbReference type="SAM" id="MobiDB-lite"/>
    </source>
</evidence>
<evidence type="ECO:0000269" key="4">
    <source>
    </source>
</evidence>
<evidence type="ECO:0000269" key="5">
    <source>
    </source>
</evidence>
<evidence type="ECO:0000305" key="6"/>
<reference key="1">
    <citation type="journal article" date="2004" name="Proc. Natl. Acad. Sci. U.S.A.">
        <title>The diploid genome sequence of Candida albicans.</title>
        <authorList>
            <person name="Jones T."/>
            <person name="Federspiel N.A."/>
            <person name="Chibana H."/>
            <person name="Dungan J."/>
            <person name="Kalman S."/>
            <person name="Magee B.B."/>
            <person name="Newport G."/>
            <person name="Thorstenson Y.R."/>
            <person name="Agabian N."/>
            <person name="Magee P.T."/>
            <person name="Davis R.W."/>
            <person name="Scherer S."/>
        </authorList>
    </citation>
    <scope>NUCLEOTIDE SEQUENCE [LARGE SCALE GENOMIC DNA]</scope>
    <source>
        <strain>SC5314 / ATCC MYA-2876</strain>
    </source>
</reference>
<reference key="2">
    <citation type="journal article" date="2007" name="Genome Biol.">
        <title>Assembly of the Candida albicans genome into sixteen supercontigs aligned on the eight chromosomes.</title>
        <authorList>
            <person name="van het Hoog M."/>
            <person name="Rast T.J."/>
            <person name="Martchenko M."/>
            <person name="Grindle S."/>
            <person name="Dignard D."/>
            <person name="Hogues H."/>
            <person name="Cuomo C."/>
            <person name="Berriman M."/>
            <person name="Scherer S."/>
            <person name="Magee B.B."/>
            <person name="Whiteway M."/>
            <person name="Chibana H."/>
            <person name="Nantel A."/>
            <person name="Magee P.T."/>
        </authorList>
    </citation>
    <scope>GENOME REANNOTATION</scope>
    <source>
        <strain>SC5314 / ATCC MYA-2876</strain>
    </source>
</reference>
<reference key="3">
    <citation type="journal article" date="2013" name="Genome Biol.">
        <title>Assembly of a phased diploid Candida albicans genome facilitates allele-specific measurements and provides a simple model for repeat and indel structure.</title>
        <authorList>
            <person name="Muzzey D."/>
            <person name="Schwartz K."/>
            <person name="Weissman J.S."/>
            <person name="Sherlock G."/>
        </authorList>
    </citation>
    <scope>NUCLEOTIDE SEQUENCE [LARGE SCALE GENOMIC DNA]</scope>
    <scope>GENOME REANNOTATION</scope>
    <source>
        <strain>SC5314 / ATCC MYA-2876</strain>
    </source>
</reference>
<reference key="4">
    <citation type="journal article" date="2010" name="FEMS Yeast Res.">
        <title>Antimicrobial peptide MUC7 12-mer activates the calcium/calcineurin pathway in Candida albicans.</title>
        <authorList>
            <person name="Lis M."/>
            <person name="Liu T.T."/>
            <person name="Barker K.S."/>
            <person name="Rogers P.D."/>
            <person name="Bobek L.A."/>
        </authorList>
    </citation>
    <scope>INDUCTION</scope>
</reference>
<reference key="5">
    <citation type="journal article" date="2012" name="Cell">
        <title>A recently evolved transcriptional network controls biofilm development in Candida albicans.</title>
        <authorList>
            <person name="Nobile C.J."/>
            <person name="Fox E.P."/>
            <person name="Nett J.E."/>
            <person name="Sorrells T.R."/>
            <person name="Mitrovich Q.M."/>
            <person name="Hernday A.D."/>
            <person name="Tuch B.B."/>
            <person name="Andes D.R."/>
            <person name="Johnson A.D."/>
        </authorList>
    </citation>
    <scope>INDUCTION</scope>
</reference>
<reference key="6">
    <citation type="journal article" date="2013" name="BMC Res. Notes">
        <title>Role of the Candida albicans MNN1 gene family in cell wall structure and virulence.</title>
        <authorList>
            <person name="Bates S."/>
            <person name="Hall R.A."/>
            <person name="Cheetham J."/>
            <person name="Netea M.G."/>
            <person name="MacCallum D.M."/>
            <person name="Brown A.J."/>
            <person name="Odds F.C."/>
            <person name="Gow N.A."/>
        </authorList>
    </citation>
    <scope>IDENTIFICATION</scope>
</reference>
<keyword id="KW-0325">Glycoprotein</keyword>
<keyword id="KW-0328">Glycosyltransferase</keyword>
<keyword id="KW-0333">Golgi apparatus</keyword>
<keyword id="KW-0472">Membrane</keyword>
<keyword id="KW-1185">Reference proteome</keyword>
<keyword id="KW-0735">Signal-anchor</keyword>
<keyword id="KW-0808">Transferase</keyword>
<keyword id="KW-0812">Transmembrane</keyword>
<keyword id="KW-1133">Transmembrane helix</keyword>
<accession>Q59VL7</accession>
<accession>A0A1D8PDE6</accession>
<accession>Q59VI0</accession>
<name>MNN15_CANAL</name>
<gene>
    <name type="primary">MNN15</name>
    <name type="ordered locus">CAALFM_C104900WA</name>
    <name type="ORF">CaO19.753</name>
    <name type="ORF">CaO19.8373</name>
</gene>
<dbReference type="EC" id="2.4.1.-"/>
<dbReference type="EMBL" id="CP017623">
    <property type="protein sequence ID" value="AOW26163.1"/>
    <property type="molecule type" value="Genomic_DNA"/>
</dbReference>
<dbReference type="RefSeq" id="XP_713563.2">
    <property type="nucleotide sequence ID" value="XM_708470.2"/>
</dbReference>
<dbReference type="FunCoup" id="Q59VL7">
    <property type="interactions" value="55"/>
</dbReference>
<dbReference type="STRING" id="237561.Q59VL7"/>
<dbReference type="GlyCosmos" id="Q59VL7">
    <property type="glycosylation" value="3 sites, No reported glycans"/>
</dbReference>
<dbReference type="EnsemblFungi" id="C1_04900W_A-T">
    <property type="protein sequence ID" value="C1_04900W_A-T-p1"/>
    <property type="gene ID" value="C1_04900W_A"/>
</dbReference>
<dbReference type="GeneID" id="3644794"/>
<dbReference type="KEGG" id="cal:CAALFM_C104900WA"/>
<dbReference type="CGD" id="CAL0000175887">
    <property type="gene designation" value="MNN15"/>
</dbReference>
<dbReference type="VEuPathDB" id="FungiDB:C1_04900W_A"/>
<dbReference type="eggNOG" id="ENOG502RZ48">
    <property type="taxonomic scope" value="Eukaryota"/>
</dbReference>
<dbReference type="HOGENOM" id="CLU_015387_0_1_1"/>
<dbReference type="InParanoid" id="Q59VL7"/>
<dbReference type="OrthoDB" id="430354at2759"/>
<dbReference type="UniPathway" id="UPA00378"/>
<dbReference type="PHI-base" id="PHI:3694"/>
<dbReference type="PRO" id="PR:Q59VL7"/>
<dbReference type="Proteomes" id="UP000000559">
    <property type="component" value="Chromosome 1"/>
</dbReference>
<dbReference type="GO" id="GO:0005794">
    <property type="term" value="C:Golgi apparatus"/>
    <property type="evidence" value="ECO:0000318"/>
    <property type="project" value="GO_Central"/>
</dbReference>
<dbReference type="GO" id="GO:0000139">
    <property type="term" value="C:Golgi membrane"/>
    <property type="evidence" value="ECO:0007669"/>
    <property type="project" value="UniProtKB-SubCell"/>
</dbReference>
<dbReference type="GO" id="GO:0000033">
    <property type="term" value="F:alpha-1,3-mannosyltransferase activity"/>
    <property type="evidence" value="ECO:0000318"/>
    <property type="project" value="GO_Central"/>
</dbReference>
<dbReference type="GO" id="GO:0046354">
    <property type="term" value="P:mannan biosynthetic process"/>
    <property type="evidence" value="ECO:0007669"/>
    <property type="project" value="UniProtKB-ARBA"/>
</dbReference>
<dbReference type="GO" id="GO:0035268">
    <property type="term" value="P:protein mannosylation"/>
    <property type="evidence" value="ECO:0007669"/>
    <property type="project" value="UniProtKB-ARBA"/>
</dbReference>
<dbReference type="GO" id="GO:0006493">
    <property type="term" value="P:protein O-linked glycosylation"/>
    <property type="evidence" value="ECO:0000318"/>
    <property type="project" value="GO_Central"/>
</dbReference>
<dbReference type="InterPro" id="IPR022751">
    <property type="entry name" value="Alpha_mannosyltransferase"/>
</dbReference>
<dbReference type="InterPro" id="IPR029044">
    <property type="entry name" value="Nucleotide-diphossugar_trans"/>
</dbReference>
<dbReference type="PANTHER" id="PTHR31392">
    <property type="entry name" value="ALPHA-1,3-MANNOSYLTRANSFERASE MNN1-RELATED"/>
    <property type="match status" value="1"/>
</dbReference>
<dbReference type="PANTHER" id="PTHR31392:SF1">
    <property type="entry name" value="ALPHA-1,3-MANNOSYLTRANSFERASE MNN1-RELATED"/>
    <property type="match status" value="1"/>
</dbReference>
<dbReference type="Pfam" id="PF11051">
    <property type="entry name" value="Mannosyl_trans3"/>
    <property type="match status" value="1"/>
</dbReference>
<dbReference type="SUPFAM" id="SSF53448">
    <property type="entry name" value="Nucleotide-diphospho-sugar transferases"/>
    <property type="match status" value="1"/>
</dbReference>